<keyword id="KW-0963">Cytoplasm</keyword>
<keyword id="KW-0539">Nucleus</keyword>
<keyword id="KW-1185">Reference proteome</keyword>
<keyword id="KW-0734">Signal transduction inhibitor</keyword>
<gene>
    <name type="primary">tip41</name>
    <name type="ORF">SPCC4B3.16</name>
</gene>
<reference key="1">
    <citation type="journal article" date="2005" name="Biochim. Biophys. Acta">
        <title>Fission yeast homologue of Tip41-like proteins regulates type 2A phosphatases and responses to nitrogen sources.</title>
        <authorList>
            <person name="Fenyvuesvolgyi C."/>
            <person name="Elder R.T."/>
            <person name="Benko Z."/>
            <person name="Liang D."/>
            <person name="Zhao R.Y."/>
        </authorList>
    </citation>
    <scope>NUCLEOTIDE SEQUENCE [MRNA]</scope>
    <scope>FUNCTION</scope>
    <source>
        <strain>972 / ATCC 24843</strain>
    </source>
</reference>
<reference key="2">
    <citation type="journal article" date="2002" name="Nature">
        <title>The genome sequence of Schizosaccharomyces pombe.</title>
        <authorList>
            <person name="Wood V."/>
            <person name="Gwilliam R."/>
            <person name="Rajandream M.A."/>
            <person name="Lyne M.H."/>
            <person name="Lyne R."/>
            <person name="Stewart A."/>
            <person name="Sgouros J.G."/>
            <person name="Peat N."/>
            <person name="Hayles J."/>
            <person name="Baker S.G."/>
            <person name="Basham D."/>
            <person name="Bowman S."/>
            <person name="Brooks K."/>
            <person name="Brown D."/>
            <person name="Brown S."/>
            <person name="Chillingworth T."/>
            <person name="Churcher C.M."/>
            <person name="Collins M."/>
            <person name="Connor R."/>
            <person name="Cronin A."/>
            <person name="Davis P."/>
            <person name="Feltwell T."/>
            <person name="Fraser A."/>
            <person name="Gentles S."/>
            <person name="Goble A."/>
            <person name="Hamlin N."/>
            <person name="Harris D.E."/>
            <person name="Hidalgo J."/>
            <person name="Hodgson G."/>
            <person name="Holroyd S."/>
            <person name="Hornsby T."/>
            <person name="Howarth S."/>
            <person name="Huckle E.J."/>
            <person name="Hunt S."/>
            <person name="Jagels K."/>
            <person name="James K.D."/>
            <person name="Jones L."/>
            <person name="Jones M."/>
            <person name="Leather S."/>
            <person name="McDonald S."/>
            <person name="McLean J."/>
            <person name="Mooney P."/>
            <person name="Moule S."/>
            <person name="Mungall K.L."/>
            <person name="Murphy L.D."/>
            <person name="Niblett D."/>
            <person name="Odell C."/>
            <person name="Oliver K."/>
            <person name="O'Neil S."/>
            <person name="Pearson D."/>
            <person name="Quail M.A."/>
            <person name="Rabbinowitsch E."/>
            <person name="Rutherford K.M."/>
            <person name="Rutter S."/>
            <person name="Saunders D."/>
            <person name="Seeger K."/>
            <person name="Sharp S."/>
            <person name="Skelton J."/>
            <person name="Simmonds M.N."/>
            <person name="Squares R."/>
            <person name="Squares S."/>
            <person name="Stevens K."/>
            <person name="Taylor K."/>
            <person name="Taylor R.G."/>
            <person name="Tivey A."/>
            <person name="Walsh S.V."/>
            <person name="Warren T."/>
            <person name="Whitehead S."/>
            <person name="Woodward J.R."/>
            <person name="Volckaert G."/>
            <person name="Aert R."/>
            <person name="Robben J."/>
            <person name="Grymonprez B."/>
            <person name="Weltjens I."/>
            <person name="Vanstreels E."/>
            <person name="Rieger M."/>
            <person name="Schaefer M."/>
            <person name="Mueller-Auer S."/>
            <person name="Gabel C."/>
            <person name="Fuchs M."/>
            <person name="Duesterhoeft A."/>
            <person name="Fritzc C."/>
            <person name="Holzer E."/>
            <person name="Moestl D."/>
            <person name="Hilbert H."/>
            <person name="Borzym K."/>
            <person name="Langer I."/>
            <person name="Beck A."/>
            <person name="Lehrach H."/>
            <person name="Reinhardt R."/>
            <person name="Pohl T.M."/>
            <person name="Eger P."/>
            <person name="Zimmermann W."/>
            <person name="Wedler H."/>
            <person name="Wambutt R."/>
            <person name="Purnelle B."/>
            <person name="Goffeau A."/>
            <person name="Cadieu E."/>
            <person name="Dreano S."/>
            <person name="Gloux S."/>
            <person name="Lelaure V."/>
            <person name="Mottier S."/>
            <person name="Galibert F."/>
            <person name="Aves S.J."/>
            <person name="Xiang Z."/>
            <person name="Hunt C."/>
            <person name="Moore K."/>
            <person name="Hurst S.M."/>
            <person name="Lucas M."/>
            <person name="Rochet M."/>
            <person name="Gaillardin C."/>
            <person name="Tallada V.A."/>
            <person name="Garzon A."/>
            <person name="Thode G."/>
            <person name="Daga R.R."/>
            <person name="Cruzado L."/>
            <person name="Jimenez J."/>
            <person name="Sanchez M."/>
            <person name="del Rey F."/>
            <person name="Benito J."/>
            <person name="Dominguez A."/>
            <person name="Revuelta J.L."/>
            <person name="Moreno S."/>
            <person name="Armstrong J."/>
            <person name="Forsburg S.L."/>
            <person name="Cerutti L."/>
            <person name="Lowe T."/>
            <person name="McCombie W.R."/>
            <person name="Paulsen I."/>
            <person name="Potashkin J."/>
            <person name="Shpakovski G.V."/>
            <person name="Ussery D."/>
            <person name="Barrell B.G."/>
            <person name="Nurse P."/>
        </authorList>
    </citation>
    <scope>NUCLEOTIDE SEQUENCE [LARGE SCALE GENOMIC DNA]</scope>
    <source>
        <strain>972 / ATCC 24843</strain>
    </source>
</reference>
<organism>
    <name type="scientific">Schizosaccharomyces pombe (strain 972 / ATCC 24843)</name>
    <name type="common">Fission yeast</name>
    <dbReference type="NCBI Taxonomy" id="284812"/>
    <lineage>
        <taxon>Eukaryota</taxon>
        <taxon>Fungi</taxon>
        <taxon>Dikarya</taxon>
        <taxon>Ascomycota</taxon>
        <taxon>Taphrinomycotina</taxon>
        <taxon>Schizosaccharomycetes</taxon>
        <taxon>Schizosaccharomycetales</taxon>
        <taxon>Schizosaccharomycetaceae</taxon>
        <taxon>Schizosaccharomyces</taxon>
    </lineage>
</organism>
<dbReference type="EMBL" id="CU329672">
    <property type="protein sequence ID" value="CAB60690.1"/>
    <property type="molecule type" value="Genomic_DNA"/>
</dbReference>
<dbReference type="PIR" id="T50432">
    <property type="entry name" value="T50432"/>
</dbReference>
<dbReference type="RefSeq" id="NP_588074.1">
    <property type="nucleotide sequence ID" value="NM_001023066.2"/>
</dbReference>
<dbReference type="SMR" id="Q9USK5"/>
<dbReference type="BioGRID" id="275476">
    <property type="interactions" value="35"/>
</dbReference>
<dbReference type="FunCoup" id="Q9USK5">
    <property type="interactions" value="676"/>
</dbReference>
<dbReference type="STRING" id="284812.Q9USK5"/>
<dbReference type="PaxDb" id="4896-SPCC4B3.16.1"/>
<dbReference type="EnsemblFungi" id="SPCC4B3.16.1">
    <property type="protein sequence ID" value="SPCC4B3.16.1:pep"/>
    <property type="gene ID" value="SPCC4B3.16"/>
</dbReference>
<dbReference type="GeneID" id="2538898"/>
<dbReference type="KEGG" id="spo:2538898"/>
<dbReference type="PomBase" id="SPCC4B3.16">
    <property type="gene designation" value="tip41"/>
</dbReference>
<dbReference type="VEuPathDB" id="FungiDB:SPCC4B3.16"/>
<dbReference type="eggNOG" id="KOG3224">
    <property type="taxonomic scope" value="Eukaryota"/>
</dbReference>
<dbReference type="HOGENOM" id="CLU_039187_0_1_1"/>
<dbReference type="InParanoid" id="Q9USK5"/>
<dbReference type="OMA" id="DMILFED"/>
<dbReference type="PhylomeDB" id="Q9USK5"/>
<dbReference type="PRO" id="PR:Q9USK5"/>
<dbReference type="Proteomes" id="UP000002485">
    <property type="component" value="Chromosome III"/>
</dbReference>
<dbReference type="GO" id="GO:0005829">
    <property type="term" value="C:cytosol"/>
    <property type="evidence" value="ECO:0007005"/>
    <property type="project" value="PomBase"/>
</dbReference>
<dbReference type="GO" id="GO:0005634">
    <property type="term" value="C:nucleus"/>
    <property type="evidence" value="ECO:0007005"/>
    <property type="project" value="PomBase"/>
</dbReference>
<dbReference type="GO" id="GO:0072542">
    <property type="term" value="F:protein phosphatase activator activity"/>
    <property type="evidence" value="ECO:0000318"/>
    <property type="project" value="GO_Central"/>
</dbReference>
<dbReference type="GO" id="GO:1904262">
    <property type="term" value="P:negative regulation of TORC1 signaling"/>
    <property type="evidence" value="ECO:0000266"/>
    <property type="project" value="PomBase"/>
</dbReference>
<dbReference type="GO" id="GO:0031929">
    <property type="term" value="P:TOR signaling"/>
    <property type="evidence" value="ECO:0000318"/>
    <property type="project" value="GO_Central"/>
</dbReference>
<dbReference type="InterPro" id="IPR051330">
    <property type="entry name" value="Phosphatase_reg/MetRdx"/>
</dbReference>
<dbReference type="InterPro" id="IPR007303">
    <property type="entry name" value="TIP41-like"/>
</dbReference>
<dbReference type="PANTHER" id="PTHR21021">
    <property type="entry name" value="GAF/PUTATIVE CYTOSKELETAL PROTEIN"/>
    <property type="match status" value="1"/>
</dbReference>
<dbReference type="PANTHER" id="PTHR21021:SF16">
    <property type="entry name" value="TIP41-LIKE PROTEIN"/>
    <property type="match status" value="1"/>
</dbReference>
<dbReference type="Pfam" id="PF04176">
    <property type="entry name" value="TIP41"/>
    <property type="match status" value="1"/>
</dbReference>
<feature type="chain" id="PRO_0000247902" description="Type 2A phosphatase activator tip41">
    <location>
        <begin position="1"/>
        <end position="252"/>
    </location>
</feature>
<sequence length="252" mass="29455">MQKQDDFSFKYWTIKVQRGSILKSHEMENLQSTLGFPPPEMTFGNNYISIEYKNQPVVGFFTEDALKMVGTKPEDVMQVSFAKDWAKSRIKPGEEYPVIYPFDWTYYTDYQGTIQRPNAKFIEIDQVIPVQKILNAGQNLWFNEIILFEDELADNGKSMFDVRARVVQGHLILLARLVVRLDKVNVRLNETRIYIDLLNDFLLKDCRKKQATYDKIIKQIPVGGDKAALLDDNNWLSERLDTVDHKIYKLNF</sequence>
<accession>Q9USK5</accession>
<name>TIP41_SCHPO</name>
<proteinExistence type="evidence at transcript level"/>
<comment type="function">
    <text evidence="2">Involved in negative regulation of the TOR signaling pathway in response to type of available nitrogen source. Activates the PP2A phosphatase ppa2.</text>
</comment>
<comment type="subcellular location">
    <subcellularLocation>
        <location>Cytoplasm</location>
    </subcellularLocation>
    <subcellularLocation>
        <location evidence="1">Nucleus</location>
    </subcellularLocation>
</comment>
<comment type="similarity">
    <text evidence="3">Belongs to the TIP41 family.</text>
</comment>
<evidence type="ECO:0000250" key="1"/>
<evidence type="ECO:0000269" key="2">
    <source>
    </source>
</evidence>
<evidence type="ECO:0000305" key="3"/>
<protein>
    <recommendedName>
        <fullName>Type 2A phosphatase activator tip41</fullName>
    </recommendedName>
    <alternativeName>
        <fullName>PP2A phosphatase activator tip41</fullName>
    </alternativeName>
</protein>